<protein>
    <recommendedName>
        <fullName evidence="1">Large ribosomal subunit protein uL3</fullName>
    </recommendedName>
    <alternativeName>
        <fullName evidence="2">50S ribosomal protein L3</fullName>
    </alternativeName>
</protein>
<dbReference type="EMBL" id="CP000947">
    <property type="protein sequence ID" value="ACA31746.1"/>
    <property type="molecule type" value="Genomic_DNA"/>
</dbReference>
<dbReference type="RefSeq" id="WP_011608217.1">
    <property type="nucleotide sequence ID" value="NC_010519.1"/>
</dbReference>
<dbReference type="SMR" id="B0UX13"/>
<dbReference type="STRING" id="228400.HSM_1952"/>
<dbReference type="GeneID" id="31488263"/>
<dbReference type="KEGG" id="hsm:HSM_1952"/>
<dbReference type="HOGENOM" id="CLU_044142_4_1_6"/>
<dbReference type="GO" id="GO:0022625">
    <property type="term" value="C:cytosolic large ribosomal subunit"/>
    <property type="evidence" value="ECO:0007669"/>
    <property type="project" value="TreeGrafter"/>
</dbReference>
<dbReference type="GO" id="GO:0019843">
    <property type="term" value="F:rRNA binding"/>
    <property type="evidence" value="ECO:0007669"/>
    <property type="project" value="UniProtKB-UniRule"/>
</dbReference>
<dbReference type="GO" id="GO:0003735">
    <property type="term" value="F:structural constituent of ribosome"/>
    <property type="evidence" value="ECO:0007669"/>
    <property type="project" value="InterPro"/>
</dbReference>
<dbReference type="GO" id="GO:0006412">
    <property type="term" value="P:translation"/>
    <property type="evidence" value="ECO:0007669"/>
    <property type="project" value="UniProtKB-UniRule"/>
</dbReference>
<dbReference type="FunFam" id="2.40.30.10:FF:000004">
    <property type="entry name" value="50S ribosomal protein L3"/>
    <property type="match status" value="1"/>
</dbReference>
<dbReference type="FunFam" id="3.30.160.810:FF:000001">
    <property type="entry name" value="50S ribosomal protein L3"/>
    <property type="match status" value="1"/>
</dbReference>
<dbReference type="Gene3D" id="3.30.160.810">
    <property type="match status" value="1"/>
</dbReference>
<dbReference type="Gene3D" id="2.40.30.10">
    <property type="entry name" value="Translation factors"/>
    <property type="match status" value="1"/>
</dbReference>
<dbReference type="HAMAP" id="MF_01325_B">
    <property type="entry name" value="Ribosomal_uL3_B"/>
    <property type="match status" value="1"/>
</dbReference>
<dbReference type="InterPro" id="IPR000597">
    <property type="entry name" value="Ribosomal_uL3"/>
</dbReference>
<dbReference type="InterPro" id="IPR019927">
    <property type="entry name" value="Ribosomal_uL3_bac/org-type"/>
</dbReference>
<dbReference type="InterPro" id="IPR019926">
    <property type="entry name" value="Ribosomal_uL3_CS"/>
</dbReference>
<dbReference type="InterPro" id="IPR009000">
    <property type="entry name" value="Transl_B-barrel_sf"/>
</dbReference>
<dbReference type="NCBIfam" id="TIGR03625">
    <property type="entry name" value="L3_bact"/>
    <property type="match status" value="1"/>
</dbReference>
<dbReference type="PANTHER" id="PTHR11229">
    <property type="entry name" value="50S RIBOSOMAL PROTEIN L3"/>
    <property type="match status" value="1"/>
</dbReference>
<dbReference type="PANTHER" id="PTHR11229:SF16">
    <property type="entry name" value="LARGE RIBOSOMAL SUBUNIT PROTEIN UL3C"/>
    <property type="match status" value="1"/>
</dbReference>
<dbReference type="Pfam" id="PF00297">
    <property type="entry name" value="Ribosomal_L3"/>
    <property type="match status" value="1"/>
</dbReference>
<dbReference type="SUPFAM" id="SSF50447">
    <property type="entry name" value="Translation proteins"/>
    <property type="match status" value="1"/>
</dbReference>
<dbReference type="PROSITE" id="PS00474">
    <property type="entry name" value="RIBOSOMAL_L3"/>
    <property type="match status" value="1"/>
</dbReference>
<evidence type="ECO:0000255" key="1">
    <source>
        <dbReference type="HAMAP-Rule" id="MF_01325"/>
    </source>
</evidence>
<evidence type="ECO:0000305" key="2"/>
<sequence>MIGLVGRKVGMTRIFNEDGVSIPVTVIEIEANRVTQVKTLENDGYTAVQVTTGFKKASRVTKPEAGHFVKAGVEAGRGLWEFRTEGEEFTLGQEINVDIFTDVKKVDVTGTSKGKGFQGGVKRWNFRTQDATHGNSLSHRVLGSIGQNQTPGRVFKGKKMAGHLGAERVTVQSLEIVRVDVERKLLLVKGSVPGATNSDVIVKPAVKA</sequence>
<gene>
    <name evidence="1" type="primary">rplC</name>
    <name type="ordered locus">HSM_1952</name>
</gene>
<name>RL3_HISS2</name>
<reference key="1">
    <citation type="submission" date="2008-02" db="EMBL/GenBank/DDBJ databases">
        <title>Complete sequence of Haemophilus somnus 2336.</title>
        <authorList>
            <consortium name="US DOE Joint Genome Institute"/>
            <person name="Siddaramappa S."/>
            <person name="Duncan A.J."/>
            <person name="Challacombe J.F."/>
            <person name="Rainey D."/>
            <person name="Gillaspy A.F."/>
            <person name="Carson M."/>
            <person name="Gipson J."/>
            <person name="Gipson M."/>
            <person name="Bruce D."/>
            <person name="Detter J.C."/>
            <person name="Han C.S."/>
            <person name="Land M."/>
            <person name="Tapia R."/>
            <person name="Thompson L.S."/>
            <person name="Orvis J."/>
            <person name="Zaitshik J."/>
            <person name="Barnes G."/>
            <person name="Brettin T.S."/>
            <person name="Dyer D.W."/>
            <person name="Inzana T.J."/>
        </authorList>
    </citation>
    <scope>NUCLEOTIDE SEQUENCE [LARGE SCALE GENOMIC DNA]</scope>
    <source>
        <strain>2336</strain>
    </source>
</reference>
<proteinExistence type="inferred from homology"/>
<feature type="chain" id="PRO_1000086444" description="Large ribosomal subunit protein uL3">
    <location>
        <begin position="1"/>
        <end position="208"/>
    </location>
</feature>
<feature type="modified residue" description="N5-methylglutamine" evidence="1">
    <location>
        <position position="149"/>
    </location>
</feature>
<comment type="function">
    <text evidence="1">One of the primary rRNA binding proteins, it binds directly near the 3'-end of the 23S rRNA, where it nucleates assembly of the 50S subunit.</text>
</comment>
<comment type="subunit">
    <text evidence="1">Part of the 50S ribosomal subunit. Forms a cluster with proteins L14 and L19.</text>
</comment>
<comment type="PTM">
    <text evidence="1">Methylated by PrmB.</text>
</comment>
<comment type="similarity">
    <text evidence="1">Belongs to the universal ribosomal protein uL3 family.</text>
</comment>
<keyword id="KW-0488">Methylation</keyword>
<keyword id="KW-0687">Ribonucleoprotein</keyword>
<keyword id="KW-0689">Ribosomal protein</keyword>
<keyword id="KW-0694">RNA-binding</keyword>
<keyword id="KW-0699">rRNA-binding</keyword>
<organism>
    <name type="scientific">Histophilus somni (strain 2336)</name>
    <name type="common">Haemophilus somnus</name>
    <dbReference type="NCBI Taxonomy" id="228400"/>
    <lineage>
        <taxon>Bacteria</taxon>
        <taxon>Pseudomonadati</taxon>
        <taxon>Pseudomonadota</taxon>
        <taxon>Gammaproteobacteria</taxon>
        <taxon>Pasteurellales</taxon>
        <taxon>Pasteurellaceae</taxon>
        <taxon>Histophilus</taxon>
    </lineage>
</organism>
<accession>B0UX13</accession>